<dbReference type="EMBL" id="AY462242">
    <property type="protein sequence ID" value="AAR88257.1"/>
    <property type="molecule type" value="mRNA"/>
</dbReference>
<dbReference type="EMBL" id="AF179275">
    <property type="protein sequence ID" value="AAD52679.1"/>
    <property type="molecule type" value="mRNA"/>
</dbReference>
<dbReference type="EMBL" id="AF097583">
    <property type="protein sequence ID" value="AAD25986.1"/>
    <property type="molecule type" value="Genomic_DNA"/>
</dbReference>
<dbReference type="SMR" id="Q9TU09"/>
<dbReference type="STRING" id="9796.ENSECAP00000035337"/>
<dbReference type="PaxDb" id="9796-ENSECAP00000035337"/>
<dbReference type="InParanoid" id="Q9TU09"/>
<dbReference type="Proteomes" id="UP000002281">
    <property type="component" value="Unplaced"/>
</dbReference>
<dbReference type="GO" id="GO:0005615">
    <property type="term" value="C:extracellular space"/>
    <property type="evidence" value="ECO:0000318"/>
    <property type="project" value="GO_Central"/>
</dbReference>
<dbReference type="GO" id="GO:0005179">
    <property type="term" value="F:hormone activity"/>
    <property type="evidence" value="ECO:0000318"/>
    <property type="project" value="GO_Central"/>
</dbReference>
<dbReference type="GO" id="GO:0051428">
    <property type="term" value="F:peptide hormone receptor binding"/>
    <property type="evidence" value="ECO:0000318"/>
    <property type="project" value="GO_Central"/>
</dbReference>
<dbReference type="GO" id="GO:1990051">
    <property type="term" value="P:activation of protein kinase C activity"/>
    <property type="evidence" value="ECO:0000250"/>
    <property type="project" value="UniProtKB"/>
</dbReference>
<dbReference type="GO" id="GO:0098868">
    <property type="term" value="P:bone growth"/>
    <property type="evidence" value="ECO:0000250"/>
    <property type="project" value="UniProtKB"/>
</dbReference>
<dbReference type="GO" id="GO:0044320">
    <property type="term" value="P:cellular response to leptin stimulus"/>
    <property type="evidence" value="ECO:0000250"/>
    <property type="project" value="UniProtKB"/>
</dbReference>
<dbReference type="GO" id="GO:0006112">
    <property type="term" value="P:energy reserve metabolic process"/>
    <property type="evidence" value="ECO:0000318"/>
    <property type="project" value="GO_Central"/>
</dbReference>
<dbReference type="GO" id="GO:0050892">
    <property type="term" value="P:intestinal absorption"/>
    <property type="evidence" value="ECO:0000250"/>
    <property type="project" value="UniProtKB"/>
</dbReference>
<dbReference type="GO" id="GO:0033210">
    <property type="term" value="P:leptin-mediated signaling pathway"/>
    <property type="evidence" value="ECO:0000250"/>
    <property type="project" value="UniProtKB"/>
</dbReference>
<dbReference type="GO" id="GO:0006629">
    <property type="term" value="P:lipid metabolic process"/>
    <property type="evidence" value="ECO:0000318"/>
    <property type="project" value="GO_Central"/>
</dbReference>
<dbReference type="GO" id="GO:0038108">
    <property type="term" value="P:negative regulation of appetite by leptin-mediated signaling pathway"/>
    <property type="evidence" value="ECO:0000250"/>
    <property type="project" value="UniProtKB"/>
</dbReference>
<dbReference type="GO" id="GO:0010507">
    <property type="term" value="P:negative regulation of autophagy"/>
    <property type="evidence" value="ECO:0000250"/>
    <property type="project" value="UniProtKB"/>
</dbReference>
<dbReference type="GO" id="GO:0046325">
    <property type="term" value="P:negative regulation of D-glucose import"/>
    <property type="evidence" value="ECO:0000250"/>
    <property type="project" value="UniProtKB"/>
</dbReference>
<dbReference type="GO" id="GO:0006909">
    <property type="term" value="P:phagocytosis"/>
    <property type="evidence" value="ECO:0000250"/>
    <property type="project" value="UniProtKB"/>
</dbReference>
<dbReference type="GO" id="GO:0032735">
    <property type="term" value="P:positive regulation of interleukin-12 production"/>
    <property type="evidence" value="ECO:0000250"/>
    <property type="project" value="UniProtKB"/>
</dbReference>
<dbReference type="GO" id="GO:0032755">
    <property type="term" value="P:positive regulation of interleukin-6 production"/>
    <property type="evidence" value="ECO:0000250"/>
    <property type="project" value="UniProtKB"/>
</dbReference>
<dbReference type="GO" id="GO:0032757">
    <property type="term" value="P:positive regulation of interleukin-8 production"/>
    <property type="evidence" value="ECO:0000250"/>
    <property type="project" value="UniProtKB"/>
</dbReference>
<dbReference type="GO" id="GO:0043410">
    <property type="term" value="P:positive regulation of MAPK cascade"/>
    <property type="evidence" value="ECO:0000250"/>
    <property type="project" value="UniProtKB"/>
</dbReference>
<dbReference type="GO" id="GO:1900745">
    <property type="term" value="P:positive regulation of p38MAPK cascade"/>
    <property type="evidence" value="ECO:0000250"/>
    <property type="project" value="UniProtKB"/>
</dbReference>
<dbReference type="GO" id="GO:0051897">
    <property type="term" value="P:positive regulation of phosphatidylinositol 3-kinase/protein kinase B signal transduction"/>
    <property type="evidence" value="ECO:0000250"/>
    <property type="project" value="UniProtKB"/>
</dbReference>
<dbReference type="GO" id="GO:0046427">
    <property type="term" value="P:positive regulation of receptor signaling pathway via JAK-STAT"/>
    <property type="evidence" value="ECO:0000250"/>
    <property type="project" value="UniProtKB"/>
</dbReference>
<dbReference type="GO" id="GO:0042102">
    <property type="term" value="P:positive regulation of T cell proliferation"/>
    <property type="evidence" value="ECO:0000250"/>
    <property type="project" value="UniProtKB"/>
</dbReference>
<dbReference type="GO" id="GO:0032008">
    <property type="term" value="P:positive regulation of TOR signaling"/>
    <property type="evidence" value="ECO:0000250"/>
    <property type="project" value="UniProtKB"/>
</dbReference>
<dbReference type="GO" id="GO:0032760">
    <property type="term" value="P:positive regulation of tumor necrosis factor production"/>
    <property type="evidence" value="ECO:0000250"/>
    <property type="project" value="UniProtKB"/>
</dbReference>
<dbReference type="GO" id="GO:0032310">
    <property type="term" value="P:prostaglandin secretion"/>
    <property type="evidence" value="ECO:0000250"/>
    <property type="project" value="UniProtKB"/>
</dbReference>
<dbReference type="GO" id="GO:0045765">
    <property type="term" value="P:regulation of angiogenesis"/>
    <property type="evidence" value="ECO:0000250"/>
    <property type="project" value="UniProtKB"/>
</dbReference>
<dbReference type="GO" id="GO:0046850">
    <property type="term" value="P:regulation of bone remodeling"/>
    <property type="evidence" value="ECO:0000250"/>
    <property type="project" value="UniProtKB"/>
</dbReference>
<dbReference type="GO" id="GO:0090335">
    <property type="term" value="P:regulation of brown fat cell differentiation"/>
    <property type="evidence" value="ECO:0000250"/>
    <property type="project" value="UniProtKB"/>
</dbReference>
<dbReference type="GO" id="GO:0051726">
    <property type="term" value="P:regulation of cell cycle"/>
    <property type="evidence" value="ECO:0000250"/>
    <property type="project" value="UniProtKB"/>
</dbReference>
<dbReference type="GO" id="GO:1900015">
    <property type="term" value="P:regulation of cytokine production involved in inflammatory response"/>
    <property type="evidence" value="ECO:0000250"/>
    <property type="project" value="UniProtKB"/>
</dbReference>
<dbReference type="GO" id="GO:0001936">
    <property type="term" value="P:regulation of endothelial cell proliferation"/>
    <property type="evidence" value="ECO:0000250"/>
    <property type="project" value="UniProtKB"/>
</dbReference>
<dbReference type="GO" id="GO:0032814">
    <property type="term" value="P:regulation of natural killer cell activation"/>
    <property type="evidence" value="ECO:0000250"/>
    <property type="project" value="UniProtKB"/>
</dbReference>
<dbReference type="GO" id="GO:0042269">
    <property type="term" value="P:regulation of natural killer cell mediated cytotoxicity"/>
    <property type="evidence" value="ECO:0000250"/>
    <property type="project" value="UniProtKB"/>
</dbReference>
<dbReference type="GO" id="GO:0032817">
    <property type="term" value="P:regulation of natural killer cell proliferation"/>
    <property type="evidence" value="ECO:0000250"/>
    <property type="project" value="UniProtKB"/>
</dbReference>
<dbReference type="GO" id="GO:0050999">
    <property type="term" value="P:regulation of nitric-oxide synthase activity"/>
    <property type="evidence" value="ECO:0000250"/>
    <property type="project" value="UniProtKB"/>
</dbReference>
<dbReference type="GO" id="GO:0032868">
    <property type="term" value="P:response to insulin"/>
    <property type="evidence" value="ECO:0000318"/>
    <property type="project" value="GO_Central"/>
</dbReference>
<dbReference type="GO" id="GO:0019953">
    <property type="term" value="P:sexual reproduction"/>
    <property type="evidence" value="ECO:0000250"/>
    <property type="project" value="UniProtKB"/>
</dbReference>
<dbReference type="GO" id="GO:0030217">
    <property type="term" value="P:T cell differentiation"/>
    <property type="evidence" value="ECO:0000250"/>
    <property type="project" value="UniProtKB"/>
</dbReference>
<dbReference type="FunFam" id="1.20.1250.10:FF:000008">
    <property type="entry name" value="Leptin"/>
    <property type="match status" value="1"/>
</dbReference>
<dbReference type="Gene3D" id="1.20.1250.10">
    <property type="match status" value="1"/>
</dbReference>
<dbReference type="InterPro" id="IPR009079">
    <property type="entry name" value="4_helix_cytokine-like_core"/>
</dbReference>
<dbReference type="InterPro" id="IPR000065">
    <property type="entry name" value="Leptin"/>
</dbReference>
<dbReference type="PANTHER" id="PTHR11724">
    <property type="entry name" value="LEPTIN"/>
    <property type="match status" value="1"/>
</dbReference>
<dbReference type="PANTHER" id="PTHR11724:SF1">
    <property type="entry name" value="LEPTIN"/>
    <property type="match status" value="1"/>
</dbReference>
<dbReference type="Pfam" id="PF02024">
    <property type="entry name" value="Leptin"/>
    <property type="match status" value="1"/>
</dbReference>
<dbReference type="PIRSF" id="PIRSF001837">
    <property type="entry name" value="Leptin"/>
    <property type="match status" value="1"/>
</dbReference>
<dbReference type="PRINTS" id="PR00495">
    <property type="entry name" value="LEPTIN"/>
</dbReference>
<dbReference type="SUPFAM" id="SSF47266">
    <property type="entry name" value="4-helical cytokines"/>
    <property type="match status" value="1"/>
</dbReference>
<reference key="1">
    <citation type="submission" date="2003-11" db="EMBL/GenBank/DDBJ databases">
        <title>Equine leptin mRNA from subcutaneous adipose.</title>
        <authorList>
            <person name="Reedy S.E."/>
            <person name="Cook R.F."/>
            <person name="Mousel M.R."/>
            <person name="Fitzgerald B.P."/>
        </authorList>
    </citation>
    <scope>NUCLEOTIDE SEQUENCE [MRNA]</scope>
</reference>
<reference key="2">
    <citation type="journal article" date="2002" name="J. Anim. Sci.">
        <title>Leptin in horses: tissue localization and relationship between peripheral concentrations of leptin and body condition.</title>
        <authorList>
            <person name="Buff P.R."/>
            <person name="Dodds A.C."/>
            <person name="Morrison C.D."/>
            <person name="Whitley N.C."/>
            <person name="McFadin E.L."/>
            <person name="Daniel J.A."/>
            <person name="Djiane J."/>
            <person name="Keisler D.H."/>
        </authorList>
    </citation>
    <scope>NUCLEOTIDE SEQUENCE [MRNA] OF 21-119</scope>
</reference>
<reference key="3">
    <citation type="journal article" date="1999" name="Mamm. Genome">
        <title>Comparative mapping of 18 equine type I genes assigned by somatic cell hybrid analysis.</title>
        <authorList>
            <person name="Caetano A.R."/>
            <person name="Pomp D."/>
            <person name="Murray J.D."/>
            <person name="Bowling A.T."/>
        </authorList>
    </citation>
    <scope>NUCLEOTIDE SEQUENCE [GENOMIC DNA] OF 41-58</scope>
</reference>
<keyword id="KW-0550">Obesity</keyword>
<keyword id="KW-1185">Reference proteome</keyword>
<keyword id="KW-0964">Secreted</keyword>
<keyword id="KW-0732">Signal</keyword>
<protein>
    <recommendedName>
        <fullName>Leptin</fullName>
    </recommendedName>
    <alternativeName>
        <fullName>Obesity factor</fullName>
    </alternativeName>
</protein>
<gene>
    <name type="primary">LEP</name>
    <name type="synonym">OB</name>
</gene>
<sequence length="145" mass="15935">LWLWPYLFFIEAVPIRKVQDDTKTLIKTIVTRINDISHTQSVSSKQRVTGLDFIPGLHPVLSLSKMDQTLAIYQQILTSLPSRNVIQISNDLENLRDLLHLLASSKSCPLPQARGLETLASLGGVLEASLLLHRGGSPEQAAGVS</sequence>
<name>LEP_HORSE</name>
<evidence type="ECO:0000250" key="1">
    <source>
        <dbReference type="UniProtKB" id="P41159"/>
    </source>
</evidence>
<evidence type="ECO:0000250" key="2">
    <source>
        <dbReference type="UniProtKB" id="P41160"/>
    </source>
</evidence>
<evidence type="ECO:0000250" key="3">
    <source>
        <dbReference type="UniProtKB" id="P50596"/>
    </source>
</evidence>
<evidence type="ECO:0000255" key="4"/>
<evidence type="ECO:0000305" key="5"/>
<proteinExistence type="evidence at transcript level"/>
<organism>
    <name type="scientific">Equus caballus</name>
    <name type="common">Horse</name>
    <dbReference type="NCBI Taxonomy" id="9796"/>
    <lineage>
        <taxon>Eukaryota</taxon>
        <taxon>Metazoa</taxon>
        <taxon>Chordata</taxon>
        <taxon>Craniata</taxon>
        <taxon>Vertebrata</taxon>
        <taxon>Euteleostomi</taxon>
        <taxon>Mammalia</taxon>
        <taxon>Eutheria</taxon>
        <taxon>Laurasiatheria</taxon>
        <taxon>Perissodactyla</taxon>
        <taxon>Equidae</taxon>
        <taxon>Equus</taxon>
    </lineage>
</organism>
<feature type="signal peptide" evidence="4">
    <location>
        <begin position="1" status="less than"/>
        <end position="12"/>
    </location>
</feature>
<feature type="chain" id="PRO_0000017684" description="Leptin">
    <location>
        <begin position="13"/>
        <end position="145"/>
    </location>
</feature>
<feature type="sequence conflict" description="In Ref. 3; AAD25986." evidence="5" ref="3">
    <original>T</original>
    <variation>N</variation>
    <location>
        <position position="49"/>
    </location>
</feature>
<feature type="sequence conflict" description="In Ref. 3; AAD25986." evidence="5" ref="3">
    <original>P</original>
    <variation>R</variation>
    <location>
        <position position="55"/>
    </location>
</feature>
<feature type="non-terminal residue">
    <location>
        <position position="1"/>
    </location>
</feature>
<feature type="non-terminal residue">
    <location>
        <position position="145"/>
    </location>
</feature>
<accession>Q9TU09</accession>
<accession>Q6S9B2</accession>
<accession>Q9XS85</accession>
<comment type="function">
    <text evidence="1 2 3">Key player in the regulation of energy balance and body weight control. Once released into the circulation, has central and peripheral effects by binding LEPR, found in many tissues, which results in the activation of several major signaling pathways (By similarity). In the hypothalamus, acts as an appetite-regulating factor that induces a decrease in food intake and an increase in energy consumption by inducing anorexinogenic factors and suppressing orexigenic neuropeptides, also regulates bone mass and secretion of hypothalamo-pituitary-adrenal hormones. In the periphery, increases basal metabolism, influences reproductive function, regulates pancreatic beta-cell function and insulin secretion, is pro-angiogenic for endothelial cell and affects innate and adaptive immunity (By similarity). In the arcuate nucleus of the hypothalamus, activates by depolarization POMC neurons inducing FOS and SOCS3 expression to release anorexigenic peptides and inhibits by hyperpolarization NPY neurons inducing SOCS3 with a consequent reduction on release of orexigenic peptides (By similarity). In addition to its known satiety inducing effect, has a modulatory role in nutrient absorption. In the intestine, reduces glucose absorption by enterocytes by activating PKC and leading to a sequential activation of p38, PI3K and ERK signaling pathways which exerts an inhibitory effect on glucose absorption (By similarity). Acts as a growth factor on certain tissues, through the activation of different signaling pathways increases expression of genes involved in cell cycle regulation such as CCND1, via JAK2-STAT3 pathway, or VEGFA, via MAPK1/3 and PI3K-AKT1 pathways (By similarity). May also play an apoptotic role via JAK2-STAT3 pathway and up-regulation of BIRC5 expression. Pro-angiogenic, has mitogenic activity on vascular endothelial cells and plays a role in matrix remodeling by regulating the expression of matrix metalloproteinases (MMPs) and tissue inhibitors of metalloproteinases (TIMPs). In innate immunity, modulates the activity and function of neutrophils by increasing chemotaxis and the secretion of oxygen radicals. Increases phagocytosis by macrophages and enhances secretion of pro-inflammatory mediators. Increases cytotoxic ability of NK cells. Plays a pro-inflammatory role, in synergy with IL1B, by inducing NOS2 which promotes the production of IL6, IL8 and Prostaglandin E2, through a signaling pathway that involves JAK2, PI3K, MAP2K1/MEK1 and MAPK14/p38 (By similarity). In adaptive immunity, promotes the switch of memory T-cells towards T helper-1 cell immune responses (By similarity). Increases CD4(+)CD25(-) T-cell proliferation and reduces autophagy during TCR (T-cell receptor) stimulation, through MTOR signaling pathway activation and BCL2 up-regulation (By similarity).</text>
</comment>
<comment type="subcellular location">
    <subcellularLocation>
        <location evidence="1">Secreted</location>
    </subcellularLocation>
</comment>
<comment type="similarity">
    <text evidence="5">Belongs to the leptin family.</text>
</comment>